<name>TRMFO_BACMK</name>
<accession>A9VT70</accession>
<evidence type="ECO:0000255" key="1">
    <source>
        <dbReference type="HAMAP-Rule" id="MF_01037"/>
    </source>
</evidence>
<keyword id="KW-0963">Cytoplasm</keyword>
<keyword id="KW-0274">FAD</keyword>
<keyword id="KW-0285">Flavoprotein</keyword>
<keyword id="KW-0489">Methyltransferase</keyword>
<keyword id="KW-0520">NAD</keyword>
<keyword id="KW-0521">NADP</keyword>
<keyword id="KW-0808">Transferase</keyword>
<keyword id="KW-0819">tRNA processing</keyword>
<gene>
    <name evidence="1" type="primary">trmFO</name>
    <name type="ordered locus">BcerKBAB4_3655</name>
</gene>
<dbReference type="EC" id="2.1.1.74" evidence="1"/>
<dbReference type="EMBL" id="CP000903">
    <property type="protein sequence ID" value="ABY44826.1"/>
    <property type="molecule type" value="Genomic_DNA"/>
</dbReference>
<dbReference type="RefSeq" id="WP_002014534.1">
    <property type="nucleotide sequence ID" value="NC_010184.1"/>
</dbReference>
<dbReference type="SMR" id="A9VT70"/>
<dbReference type="KEGG" id="bwe:BcerKBAB4_3655"/>
<dbReference type="eggNOG" id="COG1206">
    <property type="taxonomic scope" value="Bacteria"/>
</dbReference>
<dbReference type="HOGENOM" id="CLU_033057_1_0_9"/>
<dbReference type="Proteomes" id="UP000002154">
    <property type="component" value="Chromosome"/>
</dbReference>
<dbReference type="GO" id="GO:0005829">
    <property type="term" value="C:cytosol"/>
    <property type="evidence" value="ECO:0007669"/>
    <property type="project" value="TreeGrafter"/>
</dbReference>
<dbReference type="GO" id="GO:0050660">
    <property type="term" value="F:flavin adenine dinucleotide binding"/>
    <property type="evidence" value="ECO:0007669"/>
    <property type="project" value="UniProtKB-UniRule"/>
</dbReference>
<dbReference type="GO" id="GO:0047151">
    <property type="term" value="F:tRNA (uracil(54)-C5)-methyltransferase activity, 5,10-methylenetetrahydrofolate-dependent"/>
    <property type="evidence" value="ECO:0007669"/>
    <property type="project" value="UniProtKB-UniRule"/>
</dbReference>
<dbReference type="GO" id="GO:0030488">
    <property type="term" value="P:tRNA methylation"/>
    <property type="evidence" value="ECO:0007669"/>
    <property type="project" value="TreeGrafter"/>
</dbReference>
<dbReference type="GO" id="GO:0002098">
    <property type="term" value="P:tRNA wobble uridine modification"/>
    <property type="evidence" value="ECO:0007669"/>
    <property type="project" value="TreeGrafter"/>
</dbReference>
<dbReference type="FunFam" id="3.50.50.60:FF:000035">
    <property type="entry name" value="Methylenetetrahydrofolate--tRNA-(uracil-5-)-methyltransferase TrmFO"/>
    <property type="match status" value="1"/>
</dbReference>
<dbReference type="FunFam" id="3.50.50.60:FF:000040">
    <property type="entry name" value="Methylenetetrahydrofolate--tRNA-(uracil-5-)-methyltransferase TrmFO"/>
    <property type="match status" value="1"/>
</dbReference>
<dbReference type="Gene3D" id="3.50.50.60">
    <property type="entry name" value="FAD/NAD(P)-binding domain"/>
    <property type="match status" value="2"/>
</dbReference>
<dbReference type="HAMAP" id="MF_01037">
    <property type="entry name" value="TrmFO"/>
    <property type="match status" value="1"/>
</dbReference>
<dbReference type="InterPro" id="IPR036188">
    <property type="entry name" value="FAD/NAD-bd_sf"/>
</dbReference>
<dbReference type="InterPro" id="IPR002218">
    <property type="entry name" value="MnmG-rel"/>
</dbReference>
<dbReference type="InterPro" id="IPR020595">
    <property type="entry name" value="MnmG-rel_CS"/>
</dbReference>
<dbReference type="InterPro" id="IPR040131">
    <property type="entry name" value="MnmG_N"/>
</dbReference>
<dbReference type="InterPro" id="IPR004417">
    <property type="entry name" value="TrmFO"/>
</dbReference>
<dbReference type="NCBIfam" id="TIGR00137">
    <property type="entry name" value="gid_trmFO"/>
    <property type="match status" value="1"/>
</dbReference>
<dbReference type="NCBIfam" id="NF003739">
    <property type="entry name" value="PRK05335.1"/>
    <property type="match status" value="1"/>
</dbReference>
<dbReference type="PANTHER" id="PTHR11806">
    <property type="entry name" value="GLUCOSE INHIBITED DIVISION PROTEIN A"/>
    <property type="match status" value="1"/>
</dbReference>
<dbReference type="PANTHER" id="PTHR11806:SF2">
    <property type="entry name" value="METHYLENETETRAHYDROFOLATE--TRNA-(URACIL-5-)-METHYLTRANSFERASE TRMFO"/>
    <property type="match status" value="1"/>
</dbReference>
<dbReference type="Pfam" id="PF01134">
    <property type="entry name" value="GIDA"/>
    <property type="match status" value="1"/>
</dbReference>
<dbReference type="SUPFAM" id="SSF51905">
    <property type="entry name" value="FAD/NAD(P)-binding domain"/>
    <property type="match status" value="1"/>
</dbReference>
<dbReference type="PROSITE" id="PS01281">
    <property type="entry name" value="GIDA_2"/>
    <property type="match status" value="1"/>
</dbReference>
<reference key="1">
    <citation type="journal article" date="2008" name="Chem. Biol. Interact.">
        <title>Extending the Bacillus cereus group genomics to putative food-borne pathogens of different toxicity.</title>
        <authorList>
            <person name="Lapidus A."/>
            <person name="Goltsman E."/>
            <person name="Auger S."/>
            <person name="Galleron N."/>
            <person name="Segurens B."/>
            <person name="Dossat C."/>
            <person name="Land M.L."/>
            <person name="Broussolle V."/>
            <person name="Brillard J."/>
            <person name="Guinebretiere M.-H."/>
            <person name="Sanchis V."/>
            <person name="Nguen-the C."/>
            <person name="Lereclus D."/>
            <person name="Richardson P."/>
            <person name="Wincker P."/>
            <person name="Weissenbach J."/>
            <person name="Ehrlich S.D."/>
            <person name="Sorokin A."/>
        </authorList>
    </citation>
    <scope>NUCLEOTIDE SEQUENCE [LARGE SCALE GENOMIC DNA]</scope>
    <source>
        <strain>KBAB4</strain>
    </source>
</reference>
<organism>
    <name type="scientific">Bacillus mycoides (strain KBAB4)</name>
    <name type="common">Bacillus weihenstephanensis</name>
    <dbReference type="NCBI Taxonomy" id="315730"/>
    <lineage>
        <taxon>Bacteria</taxon>
        <taxon>Bacillati</taxon>
        <taxon>Bacillota</taxon>
        <taxon>Bacilli</taxon>
        <taxon>Bacillales</taxon>
        <taxon>Bacillaceae</taxon>
        <taxon>Bacillus</taxon>
        <taxon>Bacillus cereus group</taxon>
    </lineage>
</organism>
<protein>
    <recommendedName>
        <fullName evidence="1">Methylenetetrahydrofolate--tRNA-(uracil-5-)-methyltransferase TrmFO</fullName>
        <ecNumber evidence="1">2.1.1.74</ecNumber>
    </recommendedName>
    <alternativeName>
        <fullName evidence="1">Folate-dependent tRNA (uracil-5-)-methyltransferase</fullName>
    </alternativeName>
    <alternativeName>
        <fullName evidence="1">Folate-dependent tRNA(M-5-U54)-methyltransferase</fullName>
    </alternativeName>
</protein>
<comment type="function">
    <text evidence="1">Catalyzes the folate-dependent formation of 5-methyl-uridine at position 54 (M-5-U54) in all tRNAs.</text>
</comment>
<comment type="catalytic activity">
    <reaction evidence="1">
        <text>uridine(54) in tRNA + (6R)-5,10-methylene-5,6,7,8-tetrahydrofolate + NADH + H(+) = 5-methyluridine(54) in tRNA + (6S)-5,6,7,8-tetrahydrofolate + NAD(+)</text>
        <dbReference type="Rhea" id="RHEA:16873"/>
        <dbReference type="Rhea" id="RHEA-COMP:10167"/>
        <dbReference type="Rhea" id="RHEA-COMP:10193"/>
        <dbReference type="ChEBI" id="CHEBI:15378"/>
        <dbReference type="ChEBI" id="CHEBI:15636"/>
        <dbReference type="ChEBI" id="CHEBI:57453"/>
        <dbReference type="ChEBI" id="CHEBI:57540"/>
        <dbReference type="ChEBI" id="CHEBI:57945"/>
        <dbReference type="ChEBI" id="CHEBI:65315"/>
        <dbReference type="ChEBI" id="CHEBI:74447"/>
        <dbReference type="EC" id="2.1.1.74"/>
    </reaction>
</comment>
<comment type="catalytic activity">
    <reaction evidence="1">
        <text>uridine(54) in tRNA + (6R)-5,10-methylene-5,6,7,8-tetrahydrofolate + NADPH + H(+) = 5-methyluridine(54) in tRNA + (6S)-5,6,7,8-tetrahydrofolate + NADP(+)</text>
        <dbReference type="Rhea" id="RHEA:62372"/>
        <dbReference type="Rhea" id="RHEA-COMP:10167"/>
        <dbReference type="Rhea" id="RHEA-COMP:10193"/>
        <dbReference type="ChEBI" id="CHEBI:15378"/>
        <dbReference type="ChEBI" id="CHEBI:15636"/>
        <dbReference type="ChEBI" id="CHEBI:57453"/>
        <dbReference type="ChEBI" id="CHEBI:57783"/>
        <dbReference type="ChEBI" id="CHEBI:58349"/>
        <dbReference type="ChEBI" id="CHEBI:65315"/>
        <dbReference type="ChEBI" id="CHEBI:74447"/>
        <dbReference type="EC" id="2.1.1.74"/>
    </reaction>
</comment>
<comment type="cofactor">
    <cofactor evidence="1">
        <name>FAD</name>
        <dbReference type="ChEBI" id="CHEBI:57692"/>
    </cofactor>
</comment>
<comment type="subcellular location">
    <subcellularLocation>
        <location evidence="1">Cytoplasm</location>
    </subcellularLocation>
</comment>
<comment type="similarity">
    <text evidence="1">Belongs to the MnmG family. TrmFO subfamily.</text>
</comment>
<feature type="chain" id="PRO_0000346321" description="Methylenetetrahydrofolate--tRNA-(uracil-5-)-methyltransferase TrmFO">
    <location>
        <begin position="1"/>
        <end position="434"/>
    </location>
</feature>
<feature type="binding site" evidence="1">
    <location>
        <begin position="10"/>
        <end position="15"/>
    </location>
    <ligand>
        <name>FAD</name>
        <dbReference type="ChEBI" id="CHEBI:57692"/>
    </ligand>
</feature>
<sequence>MTTQVVNVIGAGLAGSEAAYQIAKRGVQVKLYEMRPVRQTPAHHTDKFAELVCSNSLRANTLTNAVGVIKEEMRLMDSVIIRAADECSVPAGGALAVDRHEFAAKVTEYVKNHPNVTVMNEEITEIPEGPTVIATGPLTSPDLSAQLKKLTGEDYFYFYDAAAPIVEKDSIDMNKVYLKSRYDKGEAAYLNCPMTEEEFDRFYEALIAAETVPLKEFEKEIFFEGCMPVEVMASRGRQTLVFGPMKPVGLEDPKTGKTPYAVVQLRQDDAAGTLYNIVGFQTHLKWGPQKEVLQLIPGLENAEIVRYGVMHRNTFINSPNLLRPTYQYKQRDDLFFAGQMTGVEGYVESAASGLLAGINAARLVKGEEPVVLPPVTAMGSMANYITATNAKNFQPMNANFGLFTPLEKKIKKKQERNEAYATRALETIQNFVNI</sequence>
<proteinExistence type="inferred from homology"/>